<proteinExistence type="evidence at transcript level"/>
<sequence length="377" mass="42236">MEQLSAANTRFAVDLFLTLTEHNPAGNIFISPFSISSALAMVFLGARGDTAAQMSKALHFEGVEIHSGFQSLNADINKCGAPYTLKLANRLFGEKSYDFLPEFLASTQEMYSAELASVDFLRAPEDARKTINAWVKEQTGGKIPELLASGMVDSLTKLVLVNAIYFKGKWQEKFMVEATKDAPFRLNKKETKTVKMMYQKKKFPFGYIKDLKCRVLELPYEGKDLSMVILLPDDIQDEATGLKKIEQQLTLEKLREWTRPESLDLLEVRVQLPRFKLEESYDLQEPLARLGVRDLFSSKADLSGMSGAKDLFISKVVHKSVVDVNEEGTEAAAATGAIAEFAMLVPEEEFVADHPFIFFIRHKPSSNILFLGRLSSP</sequence>
<keyword id="KW-0007">Acetylation</keyword>
<keyword id="KW-0963">Cytoplasm</keyword>
<keyword id="KW-1015">Disulfide bond</keyword>
<keyword id="KW-0967">Endosome</keyword>
<keyword id="KW-0458">Lysosome</keyword>
<keyword id="KW-0597">Phosphoprotein</keyword>
<keyword id="KW-0646">Protease inhibitor</keyword>
<keyword id="KW-1185">Reference proteome</keyword>
<keyword id="KW-0964">Secreted</keyword>
<keyword id="KW-0722">Serine protease inhibitor</keyword>
<protein>
    <recommendedName>
        <fullName>Leukocyte elastase inhibitor</fullName>
        <shortName>LEI</shortName>
    </recommendedName>
    <alternativeName>
        <fullName>Serpin B1</fullName>
    </alternativeName>
</protein>
<comment type="function">
    <text evidence="2">Neutrophil serine protease inhibitor that plays an essential role in the regulation of the innate immune response, inflammation and cellular homeostasis. Acts primarily to protect the cell from proteases released in the cytoplasm during stress or infection. These proteases are important in killing microbes but when released from granules, these potent enzymes also destroy host proteins and contribute to mortality. Regulates the activity of the neutrophil proteases elastase, cathepsin G, proteinase-3, chymase, chymotrypsin, and kallikrein-3. Also acts as a potent intracellular inhibitor of GZMH by directly blocking its proteolytic activity. During inflammation, limits the activity of inflammatory caspases CASP1, CASP4 and CASP5 by suppressing their caspase-recruitment domain (CARD) oligomerization and enzymatic activation. When secreted, promotes the proliferation of beta-cells via its protease inhibitory function.</text>
</comment>
<comment type="subunit">
    <text evidence="2">Monomer. Interacts (via C-terminus) with CASP1; CASP4 (via CARD domain) and CASP5; these interactions regulate the activity of inflammatory caspases. Interacts with PRTN3. Interacts with GZMH.</text>
</comment>
<comment type="subcellular location">
    <subcellularLocation>
        <location evidence="2">Secreted</location>
    </subcellularLocation>
    <subcellularLocation>
        <location evidence="2">Cytoplasm</location>
    </subcellularLocation>
    <subcellularLocation>
        <location evidence="2">Cytolytic granule</location>
    </subcellularLocation>
    <subcellularLocation>
        <location evidence="2">Early endosome</location>
    </subcellularLocation>
</comment>
<comment type="similarity">
    <text evidence="3">Belongs to the serpin family. Ov-serpin subfamily.</text>
</comment>
<reference key="1">
    <citation type="journal article" date="2009" name="Science">
        <title>The genome sequence of taurine cattle: a window to ruminant biology and evolution.</title>
        <authorList>
            <consortium name="The bovine genome sequencing and analysis consortium"/>
        </authorList>
    </citation>
    <scope>NUCLEOTIDE SEQUENCE [LARGE SCALE GENOMIC DNA]</scope>
    <source>
        <strain>Hereford</strain>
    </source>
</reference>
<reference key="2">
    <citation type="journal article" date="2005" name="BMC Genomics">
        <title>Characterization of 954 bovine full-CDS cDNA sequences.</title>
        <authorList>
            <person name="Harhay G.P."/>
            <person name="Sonstegard T.S."/>
            <person name="Keele J.W."/>
            <person name="Heaton M.P."/>
            <person name="Clawson M.L."/>
            <person name="Snelling W.M."/>
            <person name="Wiedmann R.T."/>
            <person name="Van Tassell C.P."/>
            <person name="Smith T.P.L."/>
        </authorList>
    </citation>
    <scope>NUCLEOTIDE SEQUENCE [LARGE SCALE MRNA] OF 1-330</scope>
</reference>
<accession>Q1JPB0</accession>
<dbReference type="EMBL" id="BT025443">
    <property type="protein sequence ID" value="ABF57399.1"/>
    <property type="molecule type" value="mRNA"/>
</dbReference>
<dbReference type="RefSeq" id="NP_001193539.1">
    <property type="nucleotide sequence ID" value="NM_001206610.1"/>
</dbReference>
<dbReference type="RefSeq" id="XP_024839238.1">
    <property type="nucleotide sequence ID" value="XM_024983470.2"/>
</dbReference>
<dbReference type="SMR" id="Q1JPB0"/>
<dbReference type="FunCoup" id="Q1JPB0">
    <property type="interactions" value="863"/>
</dbReference>
<dbReference type="STRING" id="9913.ENSBTAP00000058218"/>
<dbReference type="MEROPS" id="I04.006"/>
<dbReference type="PaxDb" id="9913-ENSBTAP00000015889"/>
<dbReference type="PeptideAtlas" id="Q1JPB0"/>
<dbReference type="Ensembl" id="ENSBTAT00000015889.6">
    <property type="protein sequence ID" value="ENSBTAP00000015889.5"/>
    <property type="gene ID" value="ENSBTAG00000011975.7"/>
</dbReference>
<dbReference type="GeneID" id="507264"/>
<dbReference type="KEGG" id="bta:507264"/>
<dbReference type="CTD" id="1992"/>
<dbReference type="VEuPathDB" id="HostDB:ENSBTAG00000011975"/>
<dbReference type="VGNC" id="VGNC:34470">
    <property type="gene designation" value="SERPINB1"/>
</dbReference>
<dbReference type="eggNOG" id="KOG2392">
    <property type="taxonomic scope" value="Eukaryota"/>
</dbReference>
<dbReference type="GeneTree" id="ENSGT00940000154573"/>
<dbReference type="InParanoid" id="Q1JPB0"/>
<dbReference type="OrthoDB" id="671595at2759"/>
<dbReference type="Reactome" id="R-BTA-6798695">
    <property type="pathway name" value="Neutrophil degranulation"/>
</dbReference>
<dbReference type="Proteomes" id="UP000009136">
    <property type="component" value="Chromosome 23"/>
</dbReference>
<dbReference type="Bgee" id="ENSBTAG00000011975">
    <property type="expression patterns" value="Expressed in olfactory segment of nasal mucosa and 101 other cell types or tissues"/>
</dbReference>
<dbReference type="GO" id="GO:0044194">
    <property type="term" value="C:cytolytic granule"/>
    <property type="evidence" value="ECO:0007669"/>
    <property type="project" value="UniProtKB-SubCell"/>
</dbReference>
<dbReference type="GO" id="GO:0005769">
    <property type="term" value="C:early endosome"/>
    <property type="evidence" value="ECO:0007669"/>
    <property type="project" value="UniProtKB-SubCell"/>
</dbReference>
<dbReference type="GO" id="GO:0005615">
    <property type="term" value="C:extracellular space"/>
    <property type="evidence" value="ECO:0000318"/>
    <property type="project" value="GO_Central"/>
</dbReference>
<dbReference type="GO" id="GO:0004867">
    <property type="term" value="F:serine-type endopeptidase inhibitor activity"/>
    <property type="evidence" value="ECO:0000318"/>
    <property type="project" value="GO_Central"/>
</dbReference>
<dbReference type="GO" id="GO:0032691">
    <property type="term" value="P:negative regulation of interleukin-1 beta production"/>
    <property type="evidence" value="ECO:0000318"/>
    <property type="project" value="GO_Central"/>
</dbReference>
<dbReference type="CDD" id="cd19560">
    <property type="entry name" value="serpinB1_LEI"/>
    <property type="match status" value="1"/>
</dbReference>
<dbReference type="FunFam" id="3.30.497.10:FF:000001">
    <property type="entry name" value="Serine protease inhibitor"/>
    <property type="match status" value="1"/>
</dbReference>
<dbReference type="FunFam" id="2.30.39.10:FF:000014">
    <property type="entry name" value="Serpin family B member 9"/>
    <property type="match status" value="1"/>
</dbReference>
<dbReference type="Gene3D" id="2.30.39.10">
    <property type="entry name" value="Alpha-1-antitrypsin, domain 1"/>
    <property type="match status" value="1"/>
</dbReference>
<dbReference type="Gene3D" id="3.30.497.10">
    <property type="entry name" value="Antithrombin, subunit I, domain 2"/>
    <property type="match status" value="1"/>
</dbReference>
<dbReference type="InterPro" id="IPR023795">
    <property type="entry name" value="Serpin_CS"/>
</dbReference>
<dbReference type="InterPro" id="IPR023796">
    <property type="entry name" value="Serpin_dom"/>
</dbReference>
<dbReference type="InterPro" id="IPR000215">
    <property type="entry name" value="Serpin_fam"/>
</dbReference>
<dbReference type="InterPro" id="IPR036186">
    <property type="entry name" value="Serpin_sf"/>
</dbReference>
<dbReference type="InterPro" id="IPR042178">
    <property type="entry name" value="Serpin_sf_1"/>
</dbReference>
<dbReference type="InterPro" id="IPR042185">
    <property type="entry name" value="Serpin_sf_2"/>
</dbReference>
<dbReference type="PANTHER" id="PTHR11461:SF180">
    <property type="entry name" value="LEUKOCYTE ELASTASE INHIBITOR"/>
    <property type="match status" value="1"/>
</dbReference>
<dbReference type="PANTHER" id="PTHR11461">
    <property type="entry name" value="SERINE PROTEASE INHIBITOR, SERPIN"/>
    <property type="match status" value="1"/>
</dbReference>
<dbReference type="Pfam" id="PF00079">
    <property type="entry name" value="Serpin"/>
    <property type="match status" value="1"/>
</dbReference>
<dbReference type="SMART" id="SM00093">
    <property type="entry name" value="SERPIN"/>
    <property type="match status" value="1"/>
</dbReference>
<dbReference type="SUPFAM" id="SSF56574">
    <property type="entry name" value="Serpins"/>
    <property type="match status" value="1"/>
</dbReference>
<dbReference type="PROSITE" id="PS00284">
    <property type="entry name" value="SERPIN"/>
    <property type="match status" value="1"/>
</dbReference>
<gene>
    <name type="primary">SERPINB1</name>
</gene>
<name>ILEU_BOVIN</name>
<feature type="chain" id="PRO_0000289119" description="Leukocyte elastase inhibitor">
    <location>
        <begin position="1"/>
        <end position="377"/>
    </location>
</feature>
<feature type="region of interest" description="CARD-binding motif (CBM)" evidence="2">
    <location>
        <begin position="349"/>
        <end position="377"/>
    </location>
</feature>
<feature type="site" description="Reactive bond" evidence="1">
    <location>
        <begin position="342"/>
        <end position="343"/>
    </location>
</feature>
<feature type="modified residue" description="N-acetylmethionine" evidence="2">
    <location>
        <position position="1"/>
    </location>
</feature>
<feature type="modified residue" description="N6-acetyllysine" evidence="2">
    <location>
        <position position="136"/>
    </location>
</feature>
<feature type="modified residue" description="Phosphoserine" evidence="2">
    <location>
        <position position="298"/>
    </location>
</feature>
<feature type="disulfide bond" description="Interchain" evidence="3">
    <location>
        <position position="79"/>
    </location>
</feature>
<evidence type="ECO:0000250" key="1"/>
<evidence type="ECO:0000250" key="2">
    <source>
        <dbReference type="UniProtKB" id="P30740"/>
    </source>
</evidence>
<evidence type="ECO:0000305" key="3"/>
<organism>
    <name type="scientific">Bos taurus</name>
    <name type="common">Bovine</name>
    <dbReference type="NCBI Taxonomy" id="9913"/>
    <lineage>
        <taxon>Eukaryota</taxon>
        <taxon>Metazoa</taxon>
        <taxon>Chordata</taxon>
        <taxon>Craniata</taxon>
        <taxon>Vertebrata</taxon>
        <taxon>Euteleostomi</taxon>
        <taxon>Mammalia</taxon>
        <taxon>Eutheria</taxon>
        <taxon>Laurasiatheria</taxon>
        <taxon>Artiodactyla</taxon>
        <taxon>Ruminantia</taxon>
        <taxon>Pecora</taxon>
        <taxon>Bovidae</taxon>
        <taxon>Bovinae</taxon>
        <taxon>Bos</taxon>
    </lineage>
</organism>